<organism>
    <name type="scientific">Escherichia coli (strain 55989 / EAEC)</name>
    <dbReference type="NCBI Taxonomy" id="585055"/>
    <lineage>
        <taxon>Bacteria</taxon>
        <taxon>Pseudomonadati</taxon>
        <taxon>Pseudomonadota</taxon>
        <taxon>Gammaproteobacteria</taxon>
        <taxon>Enterobacterales</taxon>
        <taxon>Enterobacteriaceae</taxon>
        <taxon>Escherichia</taxon>
    </lineage>
</organism>
<protein>
    <recommendedName>
        <fullName evidence="1">Deoxyuridine 5'-triphosphate nucleotidohydrolase</fullName>
        <shortName evidence="1">dUTPase</shortName>
        <ecNumber evidence="1">3.6.1.23</ecNumber>
    </recommendedName>
    <alternativeName>
        <fullName evidence="1">dUTP pyrophosphatase</fullName>
    </alternativeName>
</protein>
<evidence type="ECO:0000255" key="1">
    <source>
        <dbReference type="HAMAP-Rule" id="MF_00116"/>
    </source>
</evidence>
<name>DUT_ECO55</name>
<gene>
    <name evidence="1" type="primary">dut</name>
    <name type="ordered locus">EC55989_4105</name>
</gene>
<keyword id="KW-0378">Hydrolase</keyword>
<keyword id="KW-0460">Magnesium</keyword>
<keyword id="KW-0479">Metal-binding</keyword>
<keyword id="KW-0546">Nucleotide metabolism</keyword>
<keyword id="KW-1185">Reference proteome</keyword>
<sequence>MKKIDVKILDPRVGKEFPLPTYATSGSAGLDLRACLDDAVELAPGDTTLVPTGLAIHIADPSLAAMMLPRSGLGHKHGIVLGNLVGLIDSDYQGQLMISVWNRGQDSFTIQPGERIAQMIFVPVVQAEFNLVEDFDATDRGEGGFGHSGRQ</sequence>
<proteinExistence type="inferred from homology"/>
<dbReference type="EC" id="3.6.1.23" evidence="1"/>
<dbReference type="EMBL" id="CU928145">
    <property type="protein sequence ID" value="CAV00646.1"/>
    <property type="molecule type" value="Genomic_DNA"/>
</dbReference>
<dbReference type="SMR" id="B7L763"/>
<dbReference type="KEGG" id="eck:EC55989_4105"/>
<dbReference type="HOGENOM" id="CLU_068508_1_1_6"/>
<dbReference type="UniPathway" id="UPA00610">
    <property type="reaction ID" value="UER00666"/>
</dbReference>
<dbReference type="Proteomes" id="UP000000746">
    <property type="component" value="Chromosome"/>
</dbReference>
<dbReference type="GO" id="GO:0004170">
    <property type="term" value="F:dUTP diphosphatase activity"/>
    <property type="evidence" value="ECO:0007669"/>
    <property type="project" value="UniProtKB-UniRule"/>
</dbReference>
<dbReference type="GO" id="GO:0000287">
    <property type="term" value="F:magnesium ion binding"/>
    <property type="evidence" value="ECO:0007669"/>
    <property type="project" value="UniProtKB-UniRule"/>
</dbReference>
<dbReference type="GO" id="GO:0006226">
    <property type="term" value="P:dUMP biosynthetic process"/>
    <property type="evidence" value="ECO:0007669"/>
    <property type="project" value="UniProtKB-UniRule"/>
</dbReference>
<dbReference type="GO" id="GO:0046081">
    <property type="term" value="P:dUTP catabolic process"/>
    <property type="evidence" value="ECO:0007669"/>
    <property type="project" value="InterPro"/>
</dbReference>
<dbReference type="CDD" id="cd07557">
    <property type="entry name" value="trimeric_dUTPase"/>
    <property type="match status" value="1"/>
</dbReference>
<dbReference type="FunFam" id="2.70.40.10:FF:000002">
    <property type="entry name" value="dUTP diphosphatase"/>
    <property type="match status" value="1"/>
</dbReference>
<dbReference type="Gene3D" id="2.70.40.10">
    <property type="match status" value="1"/>
</dbReference>
<dbReference type="HAMAP" id="MF_00116">
    <property type="entry name" value="dUTPase_bact"/>
    <property type="match status" value="1"/>
</dbReference>
<dbReference type="InterPro" id="IPR008181">
    <property type="entry name" value="dUTPase"/>
</dbReference>
<dbReference type="InterPro" id="IPR029054">
    <property type="entry name" value="dUTPase-like"/>
</dbReference>
<dbReference type="InterPro" id="IPR036157">
    <property type="entry name" value="dUTPase-like_sf"/>
</dbReference>
<dbReference type="InterPro" id="IPR033704">
    <property type="entry name" value="dUTPase_trimeric"/>
</dbReference>
<dbReference type="NCBIfam" id="TIGR00576">
    <property type="entry name" value="dut"/>
    <property type="match status" value="1"/>
</dbReference>
<dbReference type="NCBIfam" id="NF001862">
    <property type="entry name" value="PRK00601.1"/>
    <property type="match status" value="1"/>
</dbReference>
<dbReference type="PANTHER" id="PTHR11241">
    <property type="entry name" value="DEOXYURIDINE 5'-TRIPHOSPHATE NUCLEOTIDOHYDROLASE"/>
    <property type="match status" value="1"/>
</dbReference>
<dbReference type="PANTHER" id="PTHR11241:SF0">
    <property type="entry name" value="DEOXYURIDINE 5'-TRIPHOSPHATE NUCLEOTIDOHYDROLASE"/>
    <property type="match status" value="1"/>
</dbReference>
<dbReference type="Pfam" id="PF00692">
    <property type="entry name" value="dUTPase"/>
    <property type="match status" value="1"/>
</dbReference>
<dbReference type="SUPFAM" id="SSF51283">
    <property type="entry name" value="dUTPase-like"/>
    <property type="match status" value="1"/>
</dbReference>
<reference key="1">
    <citation type="journal article" date="2009" name="PLoS Genet.">
        <title>Organised genome dynamics in the Escherichia coli species results in highly diverse adaptive paths.</title>
        <authorList>
            <person name="Touchon M."/>
            <person name="Hoede C."/>
            <person name="Tenaillon O."/>
            <person name="Barbe V."/>
            <person name="Baeriswyl S."/>
            <person name="Bidet P."/>
            <person name="Bingen E."/>
            <person name="Bonacorsi S."/>
            <person name="Bouchier C."/>
            <person name="Bouvet O."/>
            <person name="Calteau A."/>
            <person name="Chiapello H."/>
            <person name="Clermont O."/>
            <person name="Cruveiller S."/>
            <person name="Danchin A."/>
            <person name="Diard M."/>
            <person name="Dossat C."/>
            <person name="Karoui M.E."/>
            <person name="Frapy E."/>
            <person name="Garry L."/>
            <person name="Ghigo J.M."/>
            <person name="Gilles A.M."/>
            <person name="Johnson J."/>
            <person name="Le Bouguenec C."/>
            <person name="Lescat M."/>
            <person name="Mangenot S."/>
            <person name="Martinez-Jehanne V."/>
            <person name="Matic I."/>
            <person name="Nassif X."/>
            <person name="Oztas S."/>
            <person name="Petit M.A."/>
            <person name="Pichon C."/>
            <person name="Rouy Z."/>
            <person name="Ruf C.S."/>
            <person name="Schneider D."/>
            <person name="Tourret J."/>
            <person name="Vacherie B."/>
            <person name="Vallenet D."/>
            <person name="Medigue C."/>
            <person name="Rocha E.P.C."/>
            <person name="Denamur E."/>
        </authorList>
    </citation>
    <scope>NUCLEOTIDE SEQUENCE [LARGE SCALE GENOMIC DNA]</scope>
    <source>
        <strain>55989 / EAEC</strain>
    </source>
</reference>
<comment type="function">
    <text evidence="1">This enzyme is involved in nucleotide metabolism: it produces dUMP, the immediate precursor of thymidine nucleotides and it decreases the intracellular concentration of dUTP so that uracil cannot be incorporated into DNA.</text>
</comment>
<comment type="catalytic activity">
    <reaction evidence="1">
        <text>dUTP + H2O = dUMP + diphosphate + H(+)</text>
        <dbReference type="Rhea" id="RHEA:10248"/>
        <dbReference type="ChEBI" id="CHEBI:15377"/>
        <dbReference type="ChEBI" id="CHEBI:15378"/>
        <dbReference type="ChEBI" id="CHEBI:33019"/>
        <dbReference type="ChEBI" id="CHEBI:61555"/>
        <dbReference type="ChEBI" id="CHEBI:246422"/>
        <dbReference type="EC" id="3.6.1.23"/>
    </reaction>
</comment>
<comment type="cofactor">
    <cofactor evidence="1">
        <name>Mg(2+)</name>
        <dbReference type="ChEBI" id="CHEBI:18420"/>
    </cofactor>
</comment>
<comment type="pathway">
    <text evidence="1">Pyrimidine metabolism; dUMP biosynthesis; dUMP from dCTP (dUTP route): step 2/2.</text>
</comment>
<comment type="subunit">
    <text evidence="1">Homotrimer.</text>
</comment>
<comment type="similarity">
    <text evidence="1">Belongs to the dUTPase family.</text>
</comment>
<feature type="chain" id="PRO_1000119235" description="Deoxyuridine 5'-triphosphate nucleotidohydrolase">
    <location>
        <begin position="1"/>
        <end position="151"/>
    </location>
</feature>
<feature type="binding site" evidence="1">
    <location>
        <begin position="70"/>
        <end position="72"/>
    </location>
    <ligand>
        <name>substrate</name>
    </ligand>
</feature>
<feature type="binding site" evidence="1">
    <location>
        <position position="83"/>
    </location>
    <ligand>
        <name>substrate</name>
    </ligand>
</feature>
<feature type="binding site" evidence="1">
    <location>
        <begin position="87"/>
        <end position="89"/>
    </location>
    <ligand>
        <name>substrate</name>
    </ligand>
</feature>
<feature type="binding site" evidence="1">
    <location>
        <position position="97"/>
    </location>
    <ligand>
        <name>substrate</name>
    </ligand>
</feature>
<accession>B7L763</accession>